<proteinExistence type="evidence at protein level"/>
<accession>Q9CX80</accession>
<name>CYGB_MOUSE</name>
<sequence>MEKVPGDMEIERRERSEELSEAERKAVQATWARLYANCEDVGVAILVRFFVNFPSAKQYFSQFRHMEDPLEMERSPQLRKHACRVMGALNTVVENLHDPDKVSSVLALVGKAHALKHKVEPMYFKILSGVILEVIAEEFANDFPVETQKAWAKLRGLIYSHVTAAYKEVGWVQQVPNTTTPPATLPSSGP</sequence>
<protein>
    <recommendedName>
        <fullName evidence="10">Cytoglobin</fullName>
    </recommendedName>
    <alternativeName>
        <fullName evidence="11">Nitric oxygen dioxygenase</fullName>
        <ecNumber evidence="8">1.14.12.-</ecNumber>
    </alternativeName>
    <alternativeName>
        <fullName evidence="1">Nitrite reductase CYGB</fullName>
        <ecNumber evidence="1">1.7.-.-</ecNumber>
    </alternativeName>
    <alternativeName>
        <fullName evidence="1">Pseudoperoxidase CYGB</fullName>
        <ecNumber evidence="1">1.11.1.-</ecNumber>
    </alternativeName>
    <alternativeName>
        <fullName evidence="12">Superoxide dismutase CYGB</fullName>
        <ecNumber evidence="9">1.15.1.1</ecNumber>
    </alternativeName>
</protein>
<dbReference type="EC" id="1.14.12.-" evidence="8"/>
<dbReference type="EC" id="1.7.-.-" evidence="1"/>
<dbReference type="EC" id="1.11.1.-" evidence="1"/>
<dbReference type="EC" id="1.15.1.1" evidence="9"/>
<dbReference type="EMBL" id="AJ315163">
    <property type="protein sequence ID" value="CAC86187.1"/>
    <property type="molecule type" value="mRNA"/>
</dbReference>
<dbReference type="EMBL" id="AK019410">
    <property type="protein sequence ID" value="BAB31709.1"/>
    <property type="molecule type" value="mRNA"/>
</dbReference>
<dbReference type="EMBL" id="BC055040">
    <property type="protein sequence ID" value="AAH55040.1"/>
    <property type="molecule type" value="mRNA"/>
</dbReference>
<dbReference type="CCDS" id="CCDS25673.1"/>
<dbReference type="RefSeq" id="NP_084482.1">
    <property type="nucleotide sequence ID" value="NM_030206.5"/>
</dbReference>
<dbReference type="SMR" id="Q9CX80"/>
<dbReference type="BioGRID" id="227897">
    <property type="interactions" value="4"/>
</dbReference>
<dbReference type="FunCoup" id="Q9CX80">
    <property type="interactions" value="58"/>
</dbReference>
<dbReference type="STRING" id="10090.ENSMUSP00000021166"/>
<dbReference type="GlyGen" id="Q9CX80">
    <property type="glycosylation" value="7 sites, 1 N-linked glycan (1 site), 1 O-linked glycan (5 sites)"/>
</dbReference>
<dbReference type="iPTMnet" id="Q9CX80"/>
<dbReference type="PhosphoSitePlus" id="Q9CX80"/>
<dbReference type="PaxDb" id="10090-ENSMUSP00000021166"/>
<dbReference type="ProteomicsDB" id="277936"/>
<dbReference type="Antibodypedia" id="2901">
    <property type="antibodies" value="324 antibodies from 32 providers"/>
</dbReference>
<dbReference type="DNASU" id="114886"/>
<dbReference type="Ensembl" id="ENSMUST00000021166.6">
    <property type="protein sequence ID" value="ENSMUSP00000021166.6"/>
    <property type="gene ID" value="ENSMUSG00000020810.6"/>
</dbReference>
<dbReference type="GeneID" id="114886"/>
<dbReference type="KEGG" id="mmu:114886"/>
<dbReference type="UCSC" id="uc007mlv.1">
    <property type="organism name" value="mouse"/>
</dbReference>
<dbReference type="AGR" id="MGI:2149481"/>
<dbReference type="CTD" id="114757"/>
<dbReference type="MGI" id="MGI:2149481">
    <property type="gene designation" value="Cygb"/>
</dbReference>
<dbReference type="VEuPathDB" id="HostDB:ENSMUSG00000020810"/>
<dbReference type="eggNOG" id="KOG3378">
    <property type="taxonomic scope" value="Eukaryota"/>
</dbReference>
<dbReference type="GeneTree" id="ENSGT00940000155004"/>
<dbReference type="HOGENOM" id="CLU_003827_10_1_1"/>
<dbReference type="InParanoid" id="Q9CX80"/>
<dbReference type="OMA" id="TWARVYE"/>
<dbReference type="OrthoDB" id="436496at2759"/>
<dbReference type="PhylomeDB" id="Q9CX80"/>
<dbReference type="TreeFam" id="TF332967"/>
<dbReference type="Reactome" id="R-MMU-203615">
    <property type="pathway name" value="eNOS activation"/>
</dbReference>
<dbReference type="Reactome" id="R-MMU-8981607">
    <property type="pathway name" value="Intracellular oxygen transport"/>
</dbReference>
<dbReference type="BioGRID-ORCS" id="114886">
    <property type="hits" value="3 hits in 77 CRISPR screens"/>
</dbReference>
<dbReference type="ChiTaRS" id="Cygb">
    <property type="organism name" value="mouse"/>
</dbReference>
<dbReference type="PRO" id="PR:Q9CX80"/>
<dbReference type="Proteomes" id="UP000000589">
    <property type="component" value="Chromosome 11"/>
</dbReference>
<dbReference type="RNAct" id="Q9CX80">
    <property type="molecule type" value="protein"/>
</dbReference>
<dbReference type="Bgee" id="ENSMUSG00000020810">
    <property type="expression patterns" value="Expressed in interventricular septum and 239 other cell types or tissues"/>
</dbReference>
<dbReference type="ExpressionAtlas" id="Q9CX80">
    <property type="expression patterns" value="baseline and differential"/>
</dbReference>
<dbReference type="GO" id="GO:0005737">
    <property type="term" value="C:cytoplasm"/>
    <property type="evidence" value="ECO:0000314"/>
    <property type="project" value="UniProtKB"/>
</dbReference>
<dbReference type="GO" id="GO:0005829">
    <property type="term" value="C:cytosol"/>
    <property type="evidence" value="ECO:0007669"/>
    <property type="project" value="Ensembl"/>
</dbReference>
<dbReference type="GO" id="GO:0043005">
    <property type="term" value="C:neuron projection"/>
    <property type="evidence" value="ECO:0000314"/>
    <property type="project" value="MGI"/>
</dbReference>
<dbReference type="GO" id="GO:0043025">
    <property type="term" value="C:neuronal cell body"/>
    <property type="evidence" value="ECO:0000314"/>
    <property type="project" value="MGI"/>
</dbReference>
<dbReference type="GO" id="GO:0016607">
    <property type="term" value="C:nuclear speck"/>
    <property type="evidence" value="ECO:0007669"/>
    <property type="project" value="Ensembl"/>
</dbReference>
<dbReference type="GO" id="GO:0005634">
    <property type="term" value="C:nucleus"/>
    <property type="evidence" value="ECO:0000314"/>
    <property type="project" value="UniProtKB"/>
</dbReference>
<dbReference type="GO" id="GO:0070025">
    <property type="term" value="F:carbon monoxide binding"/>
    <property type="evidence" value="ECO:0007669"/>
    <property type="project" value="Ensembl"/>
</dbReference>
<dbReference type="GO" id="GO:0004096">
    <property type="term" value="F:catalase activity"/>
    <property type="evidence" value="ECO:0007669"/>
    <property type="project" value="Ensembl"/>
</dbReference>
<dbReference type="GO" id="GO:0047888">
    <property type="term" value="F:fatty acid peroxidase activity"/>
    <property type="evidence" value="ECO:0007669"/>
    <property type="project" value="Ensembl"/>
</dbReference>
<dbReference type="GO" id="GO:0020037">
    <property type="term" value="F:heme binding"/>
    <property type="evidence" value="ECO:0007669"/>
    <property type="project" value="Ensembl"/>
</dbReference>
<dbReference type="GO" id="GO:0005506">
    <property type="term" value="F:iron ion binding"/>
    <property type="evidence" value="ECO:0007669"/>
    <property type="project" value="InterPro"/>
</dbReference>
<dbReference type="GO" id="GO:0141118">
    <property type="term" value="F:nitric oxide dioxygenase activity, heme protein as donor"/>
    <property type="evidence" value="ECO:0000314"/>
    <property type="project" value="UniProtKB"/>
</dbReference>
<dbReference type="GO" id="GO:0098809">
    <property type="term" value="F:nitrite reductase activity"/>
    <property type="evidence" value="ECO:0000250"/>
    <property type="project" value="UniProtKB"/>
</dbReference>
<dbReference type="GO" id="GO:0019825">
    <property type="term" value="F:oxygen binding"/>
    <property type="evidence" value="ECO:0007669"/>
    <property type="project" value="Ensembl"/>
</dbReference>
<dbReference type="GO" id="GO:0004601">
    <property type="term" value="F:peroxidase activity"/>
    <property type="evidence" value="ECO:0000250"/>
    <property type="project" value="UniProtKB"/>
</dbReference>
<dbReference type="GO" id="GO:0004784">
    <property type="term" value="F:superoxide dismutase activity"/>
    <property type="evidence" value="ECO:0000315"/>
    <property type="project" value="UniProtKB"/>
</dbReference>
<dbReference type="GO" id="GO:0019395">
    <property type="term" value="P:fatty acid oxidation"/>
    <property type="evidence" value="ECO:0007669"/>
    <property type="project" value="Ensembl"/>
</dbReference>
<dbReference type="GO" id="GO:0032966">
    <property type="term" value="P:negative regulation of collagen biosynthetic process"/>
    <property type="evidence" value="ECO:0007669"/>
    <property type="project" value="Ensembl"/>
</dbReference>
<dbReference type="GO" id="GO:0010764">
    <property type="term" value="P:negative regulation of fibroblast migration"/>
    <property type="evidence" value="ECO:0007669"/>
    <property type="project" value="Ensembl"/>
</dbReference>
<dbReference type="GO" id="GO:2000490">
    <property type="term" value="P:negative regulation of hepatic stellate cell activation"/>
    <property type="evidence" value="ECO:0007669"/>
    <property type="project" value="Ensembl"/>
</dbReference>
<dbReference type="GO" id="GO:0046210">
    <property type="term" value="P:nitric oxide catabolic process"/>
    <property type="evidence" value="ECO:0000314"/>
    <property type="project" value="UniProtKB"/>
</dbReference>
<dbReference type="GO" id="GO:0015671">
    <property type="term" value="P:oxygen transport"/>
    <property type="evidence" value="ECO:0007669"/>
    <property type="project" value="InterPro"/>
</dbReference>
<dbReference type="GO" id="GO:0019430">
    <property type="term" value="P:removal of superoxide radicals"/>
    <property type="evidence" value="ECO:0000315"/>
    <property type="project" value="UniProtKB"/>
</dbReference>
<dbReference type="GO" id="GO:0001666">
    <property type="term" value="P:response to hypoxia"/>
    <property type="evidence" value="ECO:0007669"/>
    <property type="project" value="Ensembl"/>
</dbReference>
<dbReference type="GO" id="GO:0006979">
    <property type="term" value="P:response to oxidative stress"/>
    <property type="evidence" value="ECO:0000250"/>
    <property type="project" value="UniProtKB"/>
</dbReference>
<dbReference type="CDD" id="cd08924">
    <property type="entry name" value="Cygb"/>
    <property type="match status" value="1"/>
</dbReference>
<dbReference type="FunFam" id="1.10.490.10:FF:000005">
    <property type="entry name" value="Cytoglobin"/>
    <property type="match status" value="1"/>
</dbReference>
<dbReference type="Gene3D" id="1.10.490.10">
    <property type="entry name" value="Globins"/>
    <property type="match status" value="1"/>
</dbReference>
<dbReference type="InterPro" id="IPR000971">
    <property type="entry name" value="Globin"/>
</dbReference>
<dbReference type="InterPro" id="IPR009050">
    <property type="entry name" value="Globin-like_sf"/>
</dbReference>
<dbReference type="InterPro" id="IPR012292">
    <property type="entry name" value="Globin/Proto"/>
</dbReference>
<dbReference type="InterPro" id="IPR013314">
    <property type="entry name" value="Globin_lamprey/hagfish"/>
</dbReference>
<dbReference type="PANTHER" id="PTHR46783">
    <property type="entry name" value="CYTOGLOBIN"/>
    <property type="match status" value="1"/>
</dbReference>
<dbReference type="PANTHER" id="PTHR46783:SF2">
    <property type="entry name" value="CYTOGLOBIN"/>
    <property type="match status" value="1"/>
</dbReference>
<dbReference type="Pfam" id="PF00042">
    <property type="entry name" value="Globin"/>
    <property type="match status" value="1"/>
</dbReference>
<dbReference type="PRINTS" id="PR01906">
    <property type="entry name" value="FISHGLOBIN"/>
</dbReference>
<dbReference type="SUPFAM" id="SSF46458">
    <property type="entry name" value="Globin-like"/>
    <property type="match status" value="1"/>
</dbReference>
<dbReference type="PROSITE" id="PS01033">
    <property type="entry name" value="GLOBIN"/>
    <property type="match status" value="1"/>
</dbReference>
<keyword id="KW-0963">Cytoplasm</keyword>
<keyword id="KW-1015">Disulfide bond</keyword>
<keyword id="KW-0349">Heme</keyword>
<keyword id="KW-0408">Iron</keyword>
<keyword id="KW-0479">Metal-binding</keyword>
<keyword id="KW-0539">Nucleus</keyword>
<keyword id="KW-0560">Oxidoreductase</keyword>
<keyword id="KW-1185">Reference proteome</keyword>
<organism>
    <name type="scientific">Mus musculus</name>
    <name type="common">Mouse</name>
    <dbReference type="NCBI Taxonomy" id="10090"/>
    <lineage>
        <taxon>Eukaryota</taxon>
        <taxon>Metazoa</taxon>
        <taxon>Chordata</taxon>
        <taxon>Craniata</taxon>
        <taxon>Vertebrata</taxon>
        <taxon>Euteleostomi</taxon>
        <taxon>Mammalia</taxon>
        <taxon>Eutheria</taxon>
        <taxon>Euarchontoglires</taxon>
        <taxon>Glires</taxon>
        <taxon>Rodentia</taxon>
        <taxon>Myomorpha</taxon>
        <taxon>Muroidea</taxon>
        <taxon>Muridae</taxon>
        <taxon>Murinae</taxon>
        <taxon>Mus</taxon>
        <taxon>Mus</taxon>
    </lineage>
</organism>
<gene>
    <name evidence="13" type="primary">Cygb</name>
</gene>
<reference key="1">
    <citation type="journal article" date="2002" name="Mol. Biol. Evol.">
        <title>Cytoglobin: a novel globin type ubiquitously expressed in vertebrate tissues.</title>
        <authorList>
            <person name="Burmester T."/>
            <person name="Ebner B."/>
            <person name="Weich B."/>
            <person name="Hankeln T."/>
        </authorList>
    </citation>
    <scope>NUCLEOTIDE SEQUENCE [MRNA]</scope>
    <source>
        <tissue>Brain</tissue>
    </source>
</reference>
<reference key="2">
    <citation type="journal article" date="2005" name="Science">
        <title>The transcriptional landscape of the mammalian genome.</title>
        <authorList>
            <person name="Carninci P."/>
            <person name="Kasukawa T."/>
            <person name="Katayama S."/>
            <person name="Gough J."/>
            <person name="Frith M.C."/>
            <person name="Maeda N."/>
            <person name="Oyama R."/>
            <person name="Ravasi T."/>
            <person name="Lenhard B."/>
            <person name="Wells C."/>
            <person name="Kodzius R."/>
            <person name="Shimokawa K."/>
            <person name="Bajic V.B."/>
            <person name="Brenner S.E."/>
            <person name="Batalov S."/>
            <person name="Forrest A.R."/>
            <person name="Zavolan M."/>
            <person name="Davis M.J."/>
            <person name="Wilming L.G."/>
            <person name="Aidinis V."/>
            <person name="Allen J.E."/>
            <person name="Ambesi-Impiombato A."/>
            <person name="Apweiler R."/>
            <person name="Aturaliya R.N."/>
            <person name="Bailey T.L."/>
            <person name="Bansal M."/>
            <person name="Baxter L."/>
            <person name="Beisel K.W."/>
            <person name="Bersano T."/>
            <person name="Bono H."/>
            <person name="Chalk A.M."/>
            <person name="Chiu K.P."/>
            <person name="Choudhary V."/>
            <person name="Christoffels A."/>
            <person name="Clutterbuck D.R."/>
            <person name="Crowe M.L."/>
            <person name="Dalla E."/>
            <person name="Dalrymple B.P."/>
            <person name="de Bono B."/>
            <person name="Della Gatta G."/>
            <person name="di Bernardo D."/>
            <person name="Down T."/>
            <person name="Engstrom P."/>
            <person name="Fagiolini M."/>
            <person name="Faulkner G."/>
            <person name="Fletcher C.F."/>
            <person name="Fukushima T."/>
            <person name="Furuno M."/>
            <person name="Futaki S."/>
            <person name="Gariboldi M."/>
            <person name="Georgii-Hemming P."/>
            <person name="Gingeras T.R."/>
            <person name="Gojobori T."/>
            <person name="Green R.E."/>
            <person name="Gustincich S."/>
            <person name="Harbers M."/>
            <person name="Hayashi Y."/>
            <person name="Hensch T.K."/>
            <person name="Hirokawa N."/>
            <person name="Hill D."/>
            <person name="Huminiecki L."/>
            <person name="Iacono M."/>
            <person name="Ikeo K."/>
            <person name="Iwama A."/>
            <person name="Ishikawa T."/>
            <person name="Jakt M."/>
            <person name="Kanapin A."/>
            <person name="Katoh M."/>
            <person name="Kawasawa Y."/>
            <person name="Kelso J."/>
            <person name="Kitamura H."/>
            <person name="Kitano H."/>
            <person name="Kollias G."/>
            <person name="Krishnan S.P."/>
            <person name="Kruger A."/>
            <person name="Kummerfeld S.K."/>
            <person name="Kurochkin I.V."/>
            <person name="Lareau L.F."/>
            <person name="Lazarevic D."/>
            <person name="Lipovich L."/>
            <person name="Liu J."/>
            <person name="Liuni S."/>
            <person name="McWilliam S."/>
            <person name="Madan Babu M."/>
            <person name="Madera M."/>
            <person name="Marchionni L."/>
            <person name="Matsuda H."/>
            <person name="Matsuzawa S."/>
            <person name="Miki H."/>
            <person name="Mignone F."/>
            <person name="Miyake S."/>
            <person name="Morris K."/>
            <person name="Mottagui-Tabar S."/>
            <person name="Mulder N."/>
            <person name="Nakano N."/>
            <person name="Nakauchi H."/>
            <person name="Ng P."/>
            <person name="Nilsson R."/>
            <person name="Nishiguchi S."/>
            <person name="Nishikawa S."/>
            <person name="Nori F."/>
            <person name="Ohara O."/>
            <person name="Okazaki Y."/>
            <person name="Orlando V."/>
            <person name="Pang K.C."/>
            <person name="Pavan W.J."/>
            <person name="Pavesi G."/>
            <person name="Pesole G."/>
            <person name="Petrovsky N."/>
            <person name="Piazza S."/>
            <person name="Reed J."/>
            <person name="Reid J.F."/>
            <person name="Ring B.Z."/>
            <person name="Ringwald M."/>
            <person name="Rost B."/>
            <person name="Ruan Y."/>
            <person name="Salzberg S.L."/>
            <person name="Sandelin A."/>
            <person name="Schneider C."/>
            <person name="Schoenbach C."/>
            <person name="Sekiguchi K."/>
            <person name="Semple C.A."/>
            <person name="Seno S."/>
            <person name="Sessa L."/>
            <person name="Sheng Y."/>
            <person name="Shibata Y."/>
            <person name="Shimada H."/>
            <person name="Shimada K."/>
            <person name="Silva D."/>
            <person name="Sinclair B."/>
            <person name="Sperling S."/>
            <person name="Stupka E."/>
            <person name="Sugiura K."/>
            <person name="Sultana R."/>
            <person name="Takenaka Y."/>
            <person name="Taki K."/>
            <person name="Tammoja K."/>
            <person name="Tan S.L."/>
            <person name="Tang S."/>
            <person name="Taylor M.S."/>
            <person name="Tegner J."/>
            <person name="Teichmann S.A."/>
            <person name="Ueda H.R."/>
            <person name="van Nimwegen E."/>
            <person name="Verardo R."/>
            <person name="Wei C.L."/>
            <person name="Yagi K."/>
            <person name="Yamanishi H."/>
            <person name="Zabarovsky E."/>
            <person name="Zhu S."/>
            <person name="Zimmer A."/>
            <person name="Hide W."/>
            <person name="Bult C."/>
            <person name="Grimmond S.M."/>
            <person name="Teasdale R.D."/>
            <person name="Liu E.T."/>
            <person name="Brusic V."/>
            <person name="Quackenbush J."/>
            <person name="Wahlestedt C."/>
            <person name="Mattick J.S."/>
            <person name="Hume D.A."/>
            <person name="Kai C."/>
            <person name="Sasaki D."/>
            <person name="Tomaru Y."/>
            <person name="Fukuda S."/>
            <person name="Kanamori-Katayama M."/>
            <person name="Suzuki M."/>
            <person name="Aoki J."/>
            <person name="Arakawa T."/>
            <person name="Iida J."/>
            <person name="Imamura K."/>
            <person name="Itoh M."/>
            <person name="Kato T."/>
            <person name="Kawaji H."/>
            <person name="Kawagashira N."/>
            <person name="Kawashima T."/>
            <person name="Kojima M."/>
            <person name="Kondo S."/>
            <person name="Konno H."/>
            <person name="Nakano K."/>
            <person name="Ninomiya N."/>
            <person name="Nishio T."/>
            <person name="Okada M."/>
            <person name="Plessy C."/>
            <person name="Shibata K."/>
            <person name="Shiraki T."/>
            <person name="Suzuki S."/>
            <person name="Tagami M."/>
            <person name="Waki K."/>
            <person name="Watahiki A."/>
            <person name="Okamura-Oho Y."/>
            <person name="Suzuki H."/>
            <person name="Kawai J."/>
            <person name="Hayashizaki Y."/>
        </authorList>
    </citation>
    <scope>NUCLEOTIDE SEQUENCE [LARGE SCALE MRNA]</scope>
    <source>
        <strain>C57BL/6J</strain>
        <tissue>Embryonic head</tissue>
    </source>
</reference>
<reference key="3">
    <citation type="journal article" date="2004" name="Genome Res.">
        <title>The status, quality, and expansion of the NIH full-length cDNA project: the Mammalian Gene Collection (MGC).</title>
        <authorList>
            <consortium name="The MGC Project Team"/>
        </authorList>
    </citation>
    <scope>NUCLEOTIDE SEQUENCE [LARGE SCALE MRNA]</scope>
    <source>
        <tissue>Eye</tissue>
    </source>
</reference>
<reference key="4">
    <citation type="journal article" date="2004" name="J. Biol. Chem.">
        <title>Cytoglobin is a respiratory protein in connective tissue and neurons, which is up-regulated by hypoxia.</title>
        <authorList>
            <person name="Schmidt M."/>
            <person name="Gerlach F."/>
            <person name="Avivi A."/>
            <person name="Laufs T."/>
            <person name="Wystub S."/>
            <person name="Simpson J.C."/>
            <person name="Nevo E."/>
            <person name="Saaler-Reinhardt S."/>
            <person name="Reuss S."/>
            <person name="Hankeln T."/>
            <person name="Burmester T."/>
        </authorList>
    </citation>
    <scope>SUBCELLULAR LOCATION</scope>
</reference>
<reference key="5">
    <citation type="journal article" date="2005" name="Neurosci. Lett.">
        <title>Divergent distribution of cytoglobin and neuroglobin in the murine eye.</title>
        <authorList>
            <person name="Schmidt M."/>
            <person name="Laufs T."/>
            <person name="Reuss S."/>
            <person name="Hankeln T."/>
            <person name="Burmester T."/>
        </authorList>
    </citation>
    <scope>SUBCELLULAR LOCATION</scope>
    <scope>TISSUE SPECIFICITY</scope>
</reference>
<reference key="6">
    <citation type="journal article" date="2009" name="J. Biol. Chem.">
        <title>Cytoglobin is expressed in the vasculature and regulates cell respiration and proliferation via nitric oxide dioxygenation.</title>
        <authorList>
            <person name="Halligan K.E."/>
            <person name="Jourd'heuil F.L."/>
            <person name="Jourd'heuil D."/>
        </authorList>
    </citation>
    <scope>FUNCTION</scope>
</reference>
<reference key="7">
    <citation type="journal article" date="2010" name="Cell">
        <title>A tissue-specific atlas of mouse protein phosphorylation and expression.</title>
        <authorList>
            <person name="Huttlin E.L."/>
            <person name="Jedrychowski M.P."/>
            <person name="Elias J.E."/>
            <person name="Goswami T."/>
            <person name="Rad R."/>
            <person name="Beausoleil S.A."/>
            <person name="Villen J."/>
            <person name="Haas W."/>
            <person name="Sowa M.E."/>
            <person name="Gygi S.P."/>
        </authorList>
    </citation>
    <scope>IDENTIFICATION BY MASS SPECTROMETRY [LARGE SCALE ANALYSIS]</scope>
    <source>
        <tissue>Brain</tissue>
        <tissue>Brown adipose tissue</tissue>
        <tissue>Heart</tissue>
        <tissue>Liver</tissue>
        <tissue>Lung</tissue>
        <tissue>Spleen</tissue>
        <tissue>Testis</tissue>
    </source>
</reference>
<reference key="8">
    <citation type="journal article" date="2017" name="Nat. Commun.">
        <title>Cytoglobin regulates blood pressure and vascular tone through nitric oxide metabolism in the vascular wall.</title>
        <authorList>
            <person name="Liu X."/>
            <person name="El-Mahdy M.A."/>
            <person name="Boslett J."/>
            <person name="Varadharaj S."/>
            <person name="Hemann C."/>
            <person name="Abdelghany T.M."/>
            <person name="Ismail R.S."/>
            <person name="Little S.C."/>
            <person name="Zhou D."/>
            <person name="Thuy L.T."/>
            <person name="Kawada N."/>
            <person name="Zweier J.L."/>
        </authorList>
    </citation>
    <scope>FUNCTION</scope>
    <scope>TISSUE SPECIFICITY</scope>
    <scope>DISRUPTION PHENOTYPE</scope>
</reference>
<reference key="9">
    <citation type="journal article" date="2021" name="J. Biol. Chem.">
        <title>Defining the reducing system of the NO dioxygenase cytoglobin in vascular smooth muscle cells and its critical role in regulating cellular NO decay.</title>
        <authorList>
            <person name="Ilangovan G."/>
            <person name="Khaleel S.A."/>
            <person name="Kundu T."/>
            <person name="Hemann C."/>
            <person name="El-Mahdy M.A."/>
            <person name="Zweier J.L."/>
        </authorList>
    </citation>
    <scope>FUNCTION</scope>
    <scope>CATALYTIC ACTIVITY</scope>
    <scope>ACTIVITY REGULATION</scope>
</reference>
<reference key="10">
    <citation type="journal article" date="2021" name="Proc. Natl. Acad. Sci. U.S.A.">
        <title>Cytoglobin has potent superoxide dismutase function.</title>
        <authorList>
            <person name="Zweier J.L."/>
            <person name="Hemann C."/>
            <person name="Kundu T."/>
            <person name="Ewees M.G."/>
            <person name="Khaleel S.A."/>
            <person name="Samouilov A."/>
            <person name="Ilangovan G."/>
            <person name="El-Mahdy M.A."/>
        </authorList>
    </citation>
    <scope>FUNCTION</scope>
    <scope>CATALYTIC ACTIVITY</scope>
    <scope>SUBCELLULAR LOCATION</scope>
</reference>
<feature type="chain" id="PRO_0000053385" description="Cytoglobin">
    <location>
        <begin position="1"/>
        <end position="190"/>
    </location>
</feature>
<feature type="domain" description="Globin" evidence="2">
    <location>
        <begin position="18"/>
        <end position="167"/>
    </location>
</feature>
<feature type="region of interest" description="Disordered" evidence="3">
    <location>
        <begin position="1"/>
        <end position="21"/>
    </location>
</feature>
<feature type="binding site" description="distal binding residue" evidence="1 2">
    <location>
        <position position="81"/>
    </location>
    <ligand>
        <name>heme b</name>
        <dbReference type="ChEBI" id="CHEBI:60344"/>
    </ligand>
    <ligandPart>
        <name>Fe</name>
        <dbReference type="ChEBI" id="CHEBI:18248"/>
    </ligandPart>
</feature>
<feature type="binding site" description="proximal binding residue" evidence="1 2">
    <location>
        <position position="113"/>
    </location>
    <ligand>
        <name>heme b</name>
        <dbReference type="ChEBI" id="CHEBI:60344"/>
    </ligand>
    <ligandPart>
        <name>Fe</name>
        <dbReference type="ChEBI" id="CHEBI:18248"/>
    </ligandPart>
</feature>
<feature type="disulfide bond" description="Redox-active; in monomeric form" evidence="1">
    <location>
        <begin position="38"/>
        <end position="83"/>
    </location>
</feature>
<feature type="disulfide bond" description="Interchain (with C-83); in dimeric form" evidence="1">
    <location>
        <position position="38"/>
    </location>
</feature>
<feature type="disulfide bond" description="Interchain (with C-38); in dimeric form" evidence="1">
    <location>
        <position position="83"/>
    </location>
</feature>
<comment type="function">
    <text evidence="1 6 7 8 9">Probable multifunctional globin with a hexacoordinated heme iron required for the catalysis of various reactions depending on redox condition of the cell as well as oxygen availability (PubMed:19147491, PubMed:28393874, PubMed:33334890, PubMed:34930834). Has a nitric oxide dioxygenase (NOD) activity and is most probably involved in cell-mediated and oxygen-dependent nitric oxide consumption (PubMed:19147491, PubMed:28393874, PubMed:33334890). By scavenging this second messenger may regulate several biological processes including endothelium-mediated vasodilation and vascular tone (PubMed:19147491, PubMed:28393874). Under normoxic conditions functions as a nitric oxide dioxygenase (NOD) but under hypoxic conditions the globin may switch its function to that of a nitrite (NO2) reductase (NiR), generating nitric oxide (By similarity). Could also have peroxidase and superoxide dismutase activities, detoxifying reactive oxygen species and protecting cells against oxidative stress (PubMed:34930834). Also binds dioxygen with low affinity and could function as an oxygen sensor but has probably no function as a respiratory oxygen carrier (By similarity).</text>
</comment>
<comment type="catalytic activity">
    <reaction evidence="8">
        <text>Fe(II)-heme b-[protein] + nitric oxide + O2 = Fe(III)-heme b-[protein] + nitrate</text>
        <dbReference type="Rhea" id="RHEA:78091"/>
        <dbReference type="Rhea" id="RHEA-COMP:18975"/>
        <dbReference type="Rhea" id="RHEA-COMP:18976"/>
        <dbReference type="ChEBI" id="CHEBI:15379"/>
        <dbReference type="ChEBI" id="CHEBI:16480"/>
        <dbReference type="ChEBI" id="CHEBI:17632"/>
        <dbReference type="ChEBI" id="CHEBI:55376"/>
        <dbReference type="ChEBI" id="CHEBI:60344"/>
    </reaction>
    <physiologicalReaction direction="left-to-right" evidence="8">
        <dbReference type="Rhea" id="RHEA:78092"/>
    </physiologicalReaction>
</comment>
<comment type="catalytic activity">
    <reaction evidence="9">
        <text>2 superoxide + 2 H(+) = H2O2 + O2</text>
        <dbReference type="Rhea" id="RHEA:20696"/>
        <dbReference type="ChEBI" id="CHEBI:15378"/>
        <dbReference type="ChEBI" id="CHEBI:15379"/>
        <dbReference type="ChEBI" id="CHEBI:16240"/>
        <dbReference type="ChEBI" id="CHEBI:18421"/>
        <dbReference type="EC" id="1.15.1.1"/>
    </reaction>
    <physiologicalReaction direction="left-to-right" evidence="9">
        <dbReference type="Rhea" id="RHEA:20697"/>
    </physiologicalReaction>
</comment>
<comment type="catalytic activity">
    <reaction evidence="1">
        <text>Fe(III)-heme b-[protein] + nitric oxide + H2O = Fe(II)-heme b-[protein] + nitrite + 2 H(+)</text>
        <dbReference type="Rhea" id="RHEA:77711"/>
        <dbReference type="Rhea" id="RHEA-COMP:18975"/>
        <dbReference type="Rhea" id="RHEA-COMP:18976"/>
        <dbReference type="ChEBI" id="CHEBI:15377"/>
        <dbReference type="ChEBI" id="CHEBI:15378"/>
        <dbReference type="ChEBI" id="CHEBI:16301"/>
        <dbReference type="ChEBI" id="CHEBI:16480"/>
        <dbReference type="ChEBI" id="CHEBI:55376"/>
        <dbReference type="ChEBI" id="CHEBI:60344"/>
    </reaction>
    <physiologicalReaction direction="right-to-left" evidence="1">
        <dbReference type="Rhea" id="RHEA:77713"/>
    </physiologicalReaction>
</comment>
<comment type="catalytic activity">
    <reaction evidence="1">
        <text>H2O2 + AH2 = A + 2 H2O</text>
        <dbReference type="Rhea" id="RHEA:30275"/>
        <dbReference type="ChEBI" id="CHEBI:13193"/>
        <dbReference type="ChEBI" id="CHEBI:15377"/>
        <dbReference type="ChEBI" id="CHEBI:16240"/>
        <dbReference type="ChEBI" id="CHEBI:17499"/>
    </reaction>
    <physiologicalReaction direction="left-to-right" evidence="1">
        <dbReference type="Rhea" id="RHEA:30276"/>
    </physiologicalReaction>
</comment>
<comment type="activity regulation">
    <text evidence="8">The nitric oxide dioxygenase activity is activated by a reducing system composed of cytochrome b5, its upstream reductase CYB5R3 and NADH.</text>
</comment>
<comment type="subunit">
    <text evidence="1">Monomeric. Homodimer; disulfide-linked in vitro. Also homooligomeric in vitro.</text>
</comment>
<comment type="subcellular location">
    <subcellularLocation>
        <location evidence="4 5 9">Cytoplasm</location>
    </subcellularLocation>
    <subcellularLocation>
        <location evidence="4 5">Nucleus</location>
    </subcellularLocation>
    <text evidence="4">Nuclear localization is observed in neurons.</text>
</comment>
<comment type="tissue specificity">
    <text evidence="5 7">Expressed in brain and retina by non-neuronal cells (at protein level) (PubMed:15663964). This is the major globin expressed in vascular smooth muscle and is not present in the endothelium (at protein level) (PubMed:28393874).</text>
</comment>
<comment type="PTM">
    <text evidence="1">The formation of an intramolecular disulfide bond between cysteines Cys-38 and Cys-83 specifically enhances the nitrite reductase activity.</text>
</comment>
<comment type="disruption phenotype">
    <text evidence="7">Homozygous knockout mice display marked vasodilation with lower blood pressure and systemic vascular resistance associated with increased levels of nitric oxide.</text>
</comment>
<comment type="similarity">
    <text evidence="2">Belongs to the globin family.</text>
</comment>
<evidence type="ECO:0000250" key="1">
    <source>
        <dbReference type="UniProtKB" id="Q8WWM9"/>
    </source>
</evidence>
<evidence type="ECO:0000255" key="2">
    <source>
        <dbReference type="PROSITE-ProRule" id="PRU00238"/>
    </source>
</evidence>
<evidence type="ECO:0000256" key="3">
    <source>
        <dbReference type="SAM" id="MobiDB-lite"/>
    </source>
</evidence>
<evidence type="ECO:0000269" key="4">
    <source>
    </source>
</evidence>
<evidence type="ECO:0000269" key="5">
    <source>
    </source>
</evidence>
<evidence type="ECO:0000269" key="6">
    <source>
    </source>
</evidence>
<evidence type="ECO:0000269" key="7">
    <source>
    </source>
</evidence>
<evidence type="ECO:0000269" key="8">
    <source>
    </source>
</evidence>
<evidence type="ECO:0000269" key="9">
    <source>
    </source>
</evidence>
<evidence type="ECO:0000303" key="10">
    <source>
    </source>
</evidence>
<evidence type="ECO:0000305" key="11">
    <source>
    </source>
</evidence>
<evidence type="ECO:0000305" key="12">
    <source>
    </source>
</evidence>
<evidence type="ECO:0000312" key="13">
    <source>
        <dbReference type="MGI" id="MGI:2149481"/>
    </source>
</evidence>